<proteinExistence type="evidence at transcript level"/>
<dbReference type="EMBL" id="AP001307">
    <property type="protein sequence ID" value="BAB01920.1"/>
    <property type="molecule type" value="Genomic_DNA"/>
</dbReference>
<dbReference type="EMBL" id="CP002686">
    <property type="protein sequence ID" value="AEE75402.1"/>
    <property type="molecule type" value="Genomic_DNA"/>
</dbReference>
<dbReference type="EMBL" id="AK229270">
    <property type="protein sequence ID" value="BAF01134.1"/>
    <property type="molecule type" value="mRNA"/>
</dbReference>
<dbReference type="EMBL" id="BT029440">
    <property type="protein sequence ID" value="ABK59669.1"/>
    <property type="molecule type" value="mRNA"/>
</dbReference>
<dbReference type="BioGRID" id="5914">
    <property type="interactions" value="29"/>
</dbReference>
<dbReference type="FunCoup" id="Q9LIC7">
    <property type="interactions" value="1504"/>
</dbReference>
<dbReference type="IntAct" id="Q9LIC7">
    <property type="interactions" value="29"/>
</dbReference>
<dbReference type="STRING" id="3702.Q9LIC7"/>
<dbReference type="PaxDb" id="3702-AT3G13710.1"/>
<dbReference type="ProteomicsDB" id="234865"/>
<dbReference type="EnsemblPlants" id="AT3G13710.1">
    <property type="protein sequence ID" value="AT3G13710.1"/>
    <property type="gene ID" value="AT3G13710"/>
</dbReference>
<dbReference type="Gramene" id="AT3G13710.1">
    <property type="protein sequence ID" value="AT3G13710.1"/>
    <property type="gene ID" value="AT3G13710"/>
</dbReference>
<dbReference type="KEGG" id="ath:AT3G13710"/>
<dbReference type="Araport" id="AT3G13710"/>
<dbReference type="TAIR" id="AT3G13710">
    <property type="gene designation" value="PRA1.F4"/>
</dbReference>
<dbReference type="eggNOG" id="KOG3142">
    <property type="taxonomic scope" value="Eukaryota"/>
</dbReference>
<dbReference type="HOGENOM" id="CLU_060198_2_1_1"/>
<dbReference type="InParanoid" id="Q9LIC7"/>
<dbReference type="OMA" id="REMFDSH"/>
<dbReference type="OrthoDB" id="63113at2759"/>
<dbReference type="PhylomeDB" id="Q9LIC7"/>
<dbReference type="PRO" id="PR:Q9LIC7"/>
<dbReference type="Proteomes" id="UP000006548">
    <property type="component" value="Chromosome 3"/>
</dbReference>
<dbReference type="ExpressionAtlas" id="Q9LIC7">
    <property type="expression patterns" value="baseline"/>
</dbReference>
<dbReference type="GO" id="GO:0005783">
    <property type="term" value="C:endoplasmic reticulum"/>
    <property type="evidence" value="ECO:0000314"/>
    <property type="project" value="TAIR"/>
</dbReference>
<dbReference type="GO" id="GO:0010008">
    <property type="term" value="C:endosome membrane"/>
    <property type="evidence" value="ECO:0007669"/>
    <property type="project" value="UniProtKB-SubCell"/>
</dbReference>
<dbReference type="GO" id="GO:0016192">
    <property type="term" value="P:vesicle-mediated transport"/>
    <property type="evidence" value="ECO:0000314"/>
    <property type="project" value="TAIR"/>
</dbReference>
<dbReference type="InterPro" id="IPR004895">
    <property type="entry name" value="Prenylated_rab_accept_PRA1"/>
</dbReference>
<dbReference type="PANTHER" id="PTHR19317:SF61">
    <property type="entry name" value="PRA1 FAMILY PROTEIN F3-RELATED"/>
    <property type="match status" value="1"/>
</dbReference>
<dbReference type="PANTHER" id="PTHR19317">
    <property type="entry name" value="PRENYLATED RAB ACCEPTOR 1-RELATED"/>
    <property type="match status" value="1"/>
</dbReference>
<dbReference type="Pfam" id="PF03208">
    <property type="entry name" value="PRA1"/>
    <property type="match status" value="1"/>
</dbReference>
<name>PR1F4_ARATH</name>
<protein>
    <recommendedName>
        <fullName>PRA1 family protein F4</fullName>
        <shortName>AtPRA1.F4</shortName>
    </recommendedName>
</protein>
<evidence type="ECO:0000250" key="1"/>
<evidence type="ECO:0000255" key="2"/>
<evidence type="ECO:0000256" key="3">
    <source>
        <dbReference type="SAM" id="MobiDB-lite"/>
    </source>
</evidence>
<evidence type="ECO:0000269" key="4">
    <source>
    </source>
</evidence>
<evidence type="ECO:0000305" key="5"/>
<comment type="function">
    <text evidence="1">May be involved in both secretory and endocytic intracellular trafficking in the endosomal/prevacuolar compartments.</text>
</comment>
<comment type="subcellular location">
    <subcellularLocation>
        <location evidence="4">Endosome membrane</location>
        <topology evidence="4">Multi-pass membrane protein</topology>
    </subcellularLocation>
</comment>
<comment type="similarity">
    <text evidence="5">Belongs to the PRA1 family.</text>
</comment>
<accession>Q9LIC7</accession>
<keyword id="KW-0967">Endosome</keyword>
<keyword id="KW-0472">Membrane</keyword>
<keyword id="KW-1185">Reference proteome</keyword>
<keyword id="KW-0812">Transmembrane</keyword>
<keyword id="KW-1133">Transmembrane helix</keyword>
<keyword id="KW-0813">Transport</keyword>
<organism>
    <name type="scientific">Arabidopsis thaliana</name>
    <name type="common">Mouse-ear cress</name>
    <dbReference type="NCBI Taxonomy" id="3702"/>
    <lineage>
        <taxon>Eukaryota</taxon>
        <taxon>Viridiplantae</taxon>
        <taxon>Streptophyta</taxon>
        <taxon>Embryophyta</taxon>
        <taxon>Tracheophyta</taxon>
        <taxon>Spermatophyta</taxon>
        <taxon>Magnoliopsida</taxon>
        <taxon>eudicotyledons</taxon>
        <taxon>Gunneridae</taxon>
        <taxon>Pentapetalae</taxon>
        <taxon>rosids</taxon>
        <taxon>malvids</taxon>
        <taxon>Brassicales</taxon>
        <taxon>Brassicaceae</taxon>
        <taxon>Camelineae</taxon>
        <taxon>Arabidopsis</taxon>
    </lineage>
</organism>
<sequence length="188" mass="21001">MANNDEITTSSHASPAVNHESISRAKQRIKDGLATRRSWRVMFDLHSTGLPHGVSDVFSRIKTNLAYFRSNYAIVILNVIFFSLIWHPTSLIVFTGLVFLWIFLYFLRDVPLKVFRFQIDDRAVLIGLSVITIVLLLLTNATFNIVAALMAGAVLVLIHAVIRKTDDLFLDEEAATTETSGLTSHPSS</sequence>
<gene>
    <name type="primary">PRA1F4</name>
    <name type="ordered locus">At3g13710</name>
    <name type="ORF">MMM17.13</name>
</gene>
<reference key="1">
    <citation type="journal article" date="2000" name="DNA Res.">
        <title>Structural analysis of Arabidopsis thaliana chromosome 3. II. Sequence features of the 4,251,695 bp regions covered by 90 P1, TAC and BAC clones.</title>
        <authorList>
            <person name="Kaneko T."/>
            <person name="Katoh T."/>
            <person name="Sato S."/>
            <person name="Nakamura Y."/>
            <person name="Asamizu E."/>
            <person name="Tabata S."/>
        </authorList>
    </citation>
    <scope>NUCLEOTIDE SEQUENCE [LARGE SCALE GENOMIC DNA]</scope>
    <source>
        <strain>cv. Columbia</strain>
    </source>
</reference>
<reference key="2">
    <citation type="journal article" date="2017" name="Plant J.">
        <title>Araport11: a complete reannotation of the Arabidopsis thaliana reference genome.</title>
        <authorList>
            <person name="Cheng C.Y."/>
            <person name="Krishnakumar V."/>
            <person name="Chan A.P."/>
            <person name="Thibaud-Nissen F."/>
            <person name="Schobel S."/>
            <person name="Town C.D."/>
        </authorList>
    </citation>
    <scope>GENOME REANNOTATION</scope>
    <source>
        <strain>cv. Columbia</strain>
    </source>
</reference>
<reference key="3">
    <citation type="submission" date="2006-07" db="EMBL/GenBank/DDBJ databases">
        <title>Large-scale analysis of RIKEN Arabidopsis full-length (RAFL) cDNAs.</title>
        <authorList>
            <person name="Totoki Y."/>
            <person name="Seki M."/>
            <person name="Ishida J."/>
            <person name="Nakajima M."/>
            <person name="Enju A."/>
            <person name="Kamiya A."/>
            <person name="Narusaka M."/>
            <person name="Shin-i T."/>
            <person name="Nakagawa M."/>
            <person name="Sakamoto N."/>
            <person name="Oishi K."/>
            <person name="Kohara Y."/>
            <person name="Kobayashi M."/>
            <person name="Toyoda A."/>
            <person name="Sakaki Y."/>
            <person name="Sakurai T."/>
            <person name="Iida K."/>
            <person name="Akiyama K."/>
            <person name="Satou M."/>
            <person name="Toyoda T."/>
            <person name="Konagaya A."/>
            <person name="Carninci P."/>
            <person name="Kawai J."/>
            <person name="Hayashizaki Y."/>
            <person name="Shinozaki K."/>
        </authorList>
    </citation>
    <scope>NUCLEOTIDE SEQUENCE [LARGE SCALE MRNA]</scope>
    <source>
        <strain>cv. Columbia</strain>
    </source>
</reference>
<reference key="4">
    <citation type="submission" date="2006-11" db="EMBL/GenBank/DDBJ databases">
        <title>Arabidopsis ORF clones.</title>
        <authorList>
            <person name="Bautista V.R."/>
            <person name="Kim C.J."/>
            <person name="Chen H."/>
            <person name="Quinitio C."/>
            <person name="Ecker J.R."/>
        </authorList>
    </citation>
    <scope>NUCLEOTIDE SEQUENCE [LARGE SCALE MRNA]</scope>
    <source>
        <strain>cv. Columbia</strain>
    </source>
</reference>
<reference key="5">
    <citation type="journal article" date="2008" name="Plant Physiol.">
        <title>The PRA1 gene family in Arabidopsis.</title>
        <authorList>
            <person name="Alvim Kamei C.L."/>
            <person name="Boruc J."/>
            <person name="Vandepoele K."/>
            <person name="Van den Daele H."/>
            <person name="Maes S."/>
            <person name="Russinova E."/>
            <person name="Inze D."/>
            <person name="de Veylder L."/>
        </authorList>
    </citation>
    <scope>SUBCELLULAR LOCATION</scope>
    <scope>GENE FAMILY</scope>
    <scope>NOMENCLATURE</scope>
</reference>
<feature type="chain" id="PRO_0000352262" description="PRA1 family protein F4">
    <location>
        <begin position="1"/>
        <end position="188"/>
    </location>
</feature>
<feature type="transmembrane region" description="Helical" evidence="2">
    <location>
        <begin position="67"/>
        <end position="86"/>
    </location>
</feature>
<feature type="transmembrane region" description="Helical" evidence="2">
    <location>
        <begin position="90"/>
        <end position="107"/>
    </location>
</feature>
<feature type="transmembrane region" description="Helical" evidence="2">
    <location>
        <begin position="119"/>
        <end position="139"/>
    </location>
</feature>
<feature type="transmembrane region" description="Helical" evidence="2">
    <location>
        <begin position="142"/>
        <end position="162"/>
    </location>
</feature>
<feature type="region of interest" description="Disordered" evidence="3">
    <location>
        <begin position="1"/>
        <end position="25"/>
    </location>
</feature>
<feature type="compositionally biased region" description="Polar residues" evidence="3">
    <location>
        <begin position="1"/>
        <end position="13"/>
    </location>
</feature>